<protein>
    <recommendedName>
        <fullName evidence="1">tRNA uridine(34) hydroxylase</fullName>
        <ecNumber evidence="1">1.14.-.-</ecNumber>
    </recommendedName>
    <alternativeName>
        <fullName evidence="1">tRNA hydroxylation protein O</fullName>
    </alternativeName>
</protein>
<feature type="chain" id="PRO_1000060375" description="tRNA uridine(34) hydroxylase">
    <location>
        <begin position="1"/>
        <end position="355"/>
    </location>
</feature>
<feature type="domain" description="Rhodanese" evidence="1">
    <location>
        <begin position="146"/>
        <end position="240"/>
    </location>
</feature>
<feature type="region of interest" description="Disordered" evidence="2">
    <location>
        <begin position="333"/>
        <end position="355"/>
    </location>
</feature>
<feature type="active site" description="Cysteine persulfide intermediate" evidence="1">
    <location>
        <position position="200"/>
    </location>
</feature>
<comment type="function">
    <text evidence="1">Catalyzes oxygen-dependent 5-hydroxyuridine (ho5U) modification at position 34 in tRNAs.</text>
</comment>
<comment type="catalytic activity">
    <reaction evidence="1">
        <text>uridine(34) in tRNA + AH2 + O2 = 5-hydroxyuridine(34) in tRNA + A + H2O</text>
        <dbReference type="Rhea" id="RHEA:64224"/>
        <dbReference type="Rhea" id="RHEA-COMP:11727"/>
        <dbReference type="Rhea" id="RHEA-COMP:13381"/>
        <dbReference type="ChEBI" id="CHEBI:13193"/>
        <dbReference type="ChEBI" id="CHEBI:15377"/>
        <dbReference type="ChEBI" id="CHEBI:15379"/>
        <dbReference type="ChEBI" id="CHEBI:17499"/>
        <dbReference type="ChEBI" id="CHEBI:65315"/>
        <dbReference type="ChEBI" id="CHEBI:136877"/>
    </reaction>
</comment>
<comment type="similarity">
    <text evidence="1">Belongs to the TrhO family.</text>
</comment>
<sequence length="355" mass="40550">MPVLHNRISNEELKARMLAETEPRTTVSFYKYFTLEDAKTFRDNLYSQFVKLGVFGRVYVAKEGINAQISVPANRYDEFKIALFASHPALDQVRLNVAHEDDGKSFWVLRLKVRERIVADGIDDDSFDPANIGHYLKADQVNQMIDDPDTLFVDMRNHYEYEVGHFENAIEVPSDTFREQLPMAVDMLQHDKEKNIVMYCTGGIRCEKASAYMLHNGFKNVYHVEGGIIEYARKAKEQGLPLKFIGKNFVFDERMGERISDDVIAHCHQCGTPCDAHTNCKNDGCHLLFIQCPVCAAKFEGCCSQICQEELKLPQEEQRSRRAGRENGIKIFNKSKGLLQATMHIPSPEKSADEK</sequence>
<keyword id="KW-0560">Oxidoreductase</keyword>
<keyword id="KW-0819">tRNA processing</keyword>
<accession>A7FH09</accession>
<proteinExistence type="inferred from homology"/>
<organism>
    <name type="scientific">Yersinia pseudotuberculosis serotype O:1b (strain IP 31758)</name>
    <dbReference type="NCBI Taxonomy" id="349747"/>
    <lineage>
        <taxon>Bacteria</taxon>
        <taxon>Pseudomonadati</taxon>
        <taxon>Pseudomonadota</taxon>
        <taxon>Gammaproteobacteria</taxon>
        <taxon>Enterobacterales</taxon>
        <taxon>Yersiniaceae</taxon>
        <taxon>Yersinia</taxon>
    </lineage>
</organism>
<reference key="1">
    <citation type="journal article" date="2007" name="PLoS Genet.">
        <title>The complete genome sequence of Yersinia pseudotuberculosis IP31758, the causative agent of Far East scarlet-like fever.</title>
        <authorList>
            <person name="Eppinger M."/>
            <person name="Rosovitz M.J."/>
            <person name="Fricke W.F."/>
            <person name="Rasko D.A."/>
            <person name="Kokorina G."/>
            <person name="Fayolle C."/>
            <person name="Lindler L.E."/>
            <person name="Carniel E."/>
            <person name="Ravel J."/>
        </authorList>
    </citation>
    <scope>NUCLEOTIDE SEQUENCE [LARGE SCALE GENOMIC DNA]</scope>
    <source>
        <strain>IP 31758</strain>
    </source>
</reference>
<dbReference type="EC" id="1.14.-.-" evidence="1"/>
<dbReference type="EMBL" id="CP000720">
    <property type="protein sequence ID" value="ABS46183.1"/>
    <property type="molecule type" value="Genomic_DNA"/>
</dbReference>
<dbReference type="RefSeq" id="WP_002211854.1">
    <property type="nucleotide sequence ID" value="NC_009708.1"/>
</dbReference>
<dbReference type="SMR" id="A7FH09"/>
<dbReference type="KEGG" id="ypi:YpsIP31758_1560"/>
<dbReference type="HOGENOM" id="CLU_038878_1_1_6"/>
<dbReference type="Proteomes" id="UP000002412">
    <property type="component" value="Chromosome"/>
</dbReference>
<dbReference type="GO" id="GO:0016705">
    <property type="term" value="F:oxidoreductase activity, acting on paired donors, with incorporation or reduction of molecular oxygen"/>
    <property type="evidence" value="ECO:0007669"/>
    <property type="project" value="UniProtKB-UniRule"/>
</dbReference>
<dbReference type="GO" id="GO:0006400">
    <property type="term" value="P:tRNA modification"/>
    <property type="evidence" value="ECO:0007669"/>
    <property type="project" value="UniProtKB-UniRule"/>
</dbReference>
<dbReference type="CDD" id="cd01518">
    <property type="entry name" value="RHOD_YceA"/>
    <property type="match status" value="1"/>
</dbReference>
<dbReference type="Gene3D" id="3.30.70.100">
    <property type="match status" value="1"/>
</dbReference>
<dbReference type="Gene3D" id="3.40.250.10">
    <property type="entry name" value="Rhodanese-like domain"/>
    <property type="match status" value="1"/>
</dbReference>
<dbReference type="HAMAP" id="MF_00469">
    <property type="entry name" value="TrhO"/>
    <property type="match status" value="1"/>
</dbReference>
<dbReference type="InterPro" id="IPR001763">
    <property type="entry name" value="Rhodanese-like_dom"/>
</dbReference>
<dbReference type="InterPro" id="IPR036873">
    <property type="entry name" value="Rhodanese-like_dom_sf"/>
</dbReference>
<dbReference type="InterPro" id="IPR022111">
    <property type="entry name" value="Rhodanese_C"/>
</dbReference>
<dbReference type="InterPro" id="IPR020936">
    <property type="entry name" value="TrhO"/>
</dbReference>
<dbReference type="InterPro" id="IPR040503">
    <property type="entry name" value="TRHO_N"/>
</dbReference>
<dbReference type="NCBIfam" id="NF001133">
    <property type="entry name" value="PRK00142.1-1"/>
    <property type="match status" value="1"/>
</dbReference>
<dbReference type="PANTHER" id="PTHR43846:SF1">
    <property type="entry name" value="TRNA URIDINE(34) HYDROXYLASE"/>
    <property type="match status" value="1"/>
</dbReference>
<dbReference type="PANTHER" id="PTHR43846">
    <property type="entry name" value="UPF0176 PROTEIN YCEA"/>
    <property type="match status" value="1"/>
</dbReference>
<dbReference type="Pfam" id="PF00581">
    <property type="entry name" value="Rhodanese"/>
    <property type="match status" value="1"/>
</dbReference>
<dbReference type="Pfam" id="PF12368">
    <property type="entry name" value="Rhodanese_C"/>
    <property type="match status" value="1"/>
</dbReference>
<dbReference type="Pfam" id="PF17773">
    <property type="entry name" value="UPF0176_N"/>
    <property type="match status" value="1"/>
</dbReference>
<dbReference type="SMART" id="SM00450">
    <property type="entry name" value="RHOD"/>
    <property type="match status" value="1"/>
</dbReference>
<dbReference type="SUPFAM" id="SSF52821">
    <property type="entry name" value="Rhodanese/Cell cycle control phosphatase"/>
    <property type="match status" value="1"/>
</dbReference>
<dbReference type="PROSITE" id="PS50206">
    <property type="entry name" value="RHODANESE_3"/>
    <property type="match status" value="1"/>
</dbReference>
<name>TRHO_YERP3</name>
<evidence type="ECO:0000255" key="1">
    <source>
        <dbReference type="HAMAP-Rule" id="MF_00469"/>
    </source>
</evidence>
<evidence type="ECO:0000256" key="2">
    <source>
        <dbReference type="SAM" id="MobiDB-lite"/>
    </source>
</evidence>
<gene>
    <name evidence="1" type="primary">trhO</name>
    <name type="ordered locus">YpsIP31758_1560</name>
</gene>